<feature type="chain" id="PRO_0000460027" description="Cyclic GMP-AMP synthase-like receptor">
    <location>
        <begin position="1"/>
        <end position="485"/>
    </location>
</feature>
<feature type="binding site" evidence="2">
    <location>
        <position position="70"/>
    </location>
    <ligand>
        <name>ATP</name>
        <dbReference type="ChEBI" id="CHEBI:30616"/>
    </ligand>
</feature>
<feature type="binding site" evidence="2">
    <location>
        <begin position="82"/>
        <end position="84"/>
    </location>
    <ligand>
        <name>ATP</name>
        <dbReference type="ChEBI" id="CHEBI:30616"/>
    </ligand>
</feature>
<feature type="binding site" evidence="2">
    <location>
        <position position="82"/>
    </location>
    <ligand>
        <name>Mg(2+)</name>
        <dbReference type="ChEBI" id="CHEBI:18420"/>
        <note>catalytic</note>
    </ligand>
</feature>
<feature type="binding site" evidence="2">
    <location>
        <position position="84"/>
    </location>
    <ligand>
        <name>Mg(2+)</name>
        <dbReference type="ChEBI" id="CHEBI:18420"/>
        <note>catalytic</note>
    </ligand>
</feature>
<feature type="binding site" evidence="2">
    <location>
        <position position="204"/>
    </location>
    <ligand>
        <name>GTP</name>
        <dbReference type="ChEBI" id="CHEBI:37565"/>
    </ligand>
</feature>
<feature type="binding site" evidence="2">
    <location>
        <position position="204"/>
    </location>
    <ligand>
        <name>Mg(2+)</name>
        <dbReference type="ChEBI" id="CHEBI:18420"/>
        <note>catalytic</note>
    </ligand>
</feature>
<feature type="binding site" evidence="2">
    <location>
        <begin position="247"/>
        <end position="254"/>
    </location>
    <ligand>
        <name>GTP</name>
        <dbReference type="ChEBI" id="CHEBI:37565"/>
    </ligand>
</feature>
<feature type="binding site" evidence="2">
    <location>
        <position position="271"/>
    </location>
    <ligand>
        <name>ATP</name>
        <dbReference type="ChEBI" id="CHEBI:30616"/>
    </ligand>
</feature>
<feature type="binding site" evidence="2">
    <location>
        <position position="274"/>
    </location>
    <ligand>
        <name>ATP</name>
        <dbReference type="ChEBI" id="CHEBI:30616"/>
    </ligand>
</feature>
<feature type="binding site" evidence="1">
    <location>
        <position position="298"/>
    </location>
    <ligand>
        <name>Mn(2+)</name>
        <dbReference type="ChEBI" id="CHEBI:29035"/>
    </ligand>
</feature>
<feature type="binding site" evidence="1">
    <location>
        <position position="304"/>
    </location>
    <ligand>
        <name>Mn(2+)</name>
        <dbReference type="ChEBI" id="CHEBI:29035"/>
    </ligand>
</feature>
<comment type="function">
    <text evidence="3">Nucleotidyltransferase that catalyzes the formation of cyclic GMP-AMP (2',3'-cGAMP) from ATP and GTP and plays a key role in innate immunity (PubMed:37379839). Directly binds some unknown ligand, activating the nucleotidyltransferase activity, leading to synthesis of 2',3'-cGAMP, a second messenger that binds to and activates Sting, thereby triggering the immune response via activation of the NF-kappa-B transcription factor (PubMed:37379839).</text>
</comment>
<comment type="catalytic activity">
    <reaction evidence="3">
        <text>GTP + ATP = 2',3'-cGAMP + 2 diphosphate</text>
        <dbReference type="Rhea" id="RHEA:42064"/>
        <dbReference type="ChEBI" id="CHEBI:30616"/>
        <dbReference type="ChEBI" id="CHEBI:33019"/>
        <dbReference type="ChEBI" id="CHEBI:37565"/>
        <dbReference type="ChEBI" id="CHEBI:143093"/>
        <dbReference type="EC" id="2.7.7.86"/>
    </reaction>
    <physiologicalReaction direction="left-to-right" evidence="3">
        <dbReference type="Rhea" id="RHEA:42065"/>
    </physiologicalReaction>
</comment>
<comment type="catalytic activity">
    <reaction evidence="3">
        <text>GTP + ATP = pppGp(2'-5')A + diphosphate</text>
        <dbReference type="Rhea" id="RHEA:23748"/>
        <dbReference type="ChEBI" id="CHEBI:30616"/>
        <dbReference type="ChEBI" id="CHEBI:33019"/>
        <dbReference type="ChEBI" id="CHEBI:37565"/>
        <dbReference type="ChEBI" id="CHEBI:78318"/>
    </reaction>
    <physiologicalReaction direction="left-to-right" evidence="3">
        <dbReference type="Rhea" id="RHEA:23749"/>
    </physiologicalReaction>
</comment>
<comment type="catalytic activity">
    <reaction evidence="3">
        <text>pppGp(2'-5')A = 2',3'-cGAMP + diphosphate</text>
        <dbReference type="Rhea" id="RHEA:23924"/>
        <dbReference type="ChEBI" id="CHEBI:33019"/>
        <dbReference type="ChEBI" id="CHEBI:78318"/>
        <dbReference type="ChEBI" id="CHEBI:143093"/>
    </reaction>
    <physiologicalReaction direction="left-to-right" evidence="3">
        <dbReference type="Rhea" id="RHEA:23925"/>
    </physiologicalReaction>
</comment>
<comment type="cofactor">
    <cofactor evidence="1">
        <name>Mg(2+)</name>
        <dbReference type="ChEBI" id="CHEBI:18420"/>
    </cofactor>
    <cofactor evidence="1">
        <name>Mn(2+)</name>
        <dbReference type="ChEBI" id="CHEBI:29035"/>
    </cofactor>
</comment>
<comment type="similarity">
    <text evidence="5">Belongs to the mab-21 family.</text>
</comment>
<sequence length="485" mass="56923">MVDENLYRIKKYSDDTAFSCISKHFITLKDEEIKANNQHLHNVVSQGLIPLMKEDTLFKDIYRNIKYEGSYFKGTKVAKPDEYDLNLSMKLPLNYNELQVETNHKHFSYVKIKVNSESKLPKWEEHSKILNKWLSDKNYLNQNKFHQWMEAIMTNTYKKLKKSDNFYELEVDGKNYRIKQFKKSGPAFTIFVELGDHPTLMSMDIVPCLELNDIILQGYKTFPDVSPSKCVVAKPISKEPEGEFLWRLSFYEQEKQILSNSEVSKLKVVVKMIKKLRDQLNYKPLASYYIETIFLHEIAKRKSDVDFFRASKTSLFIYMLQKLIQALEKKCIPYFWHEGHNLIGHLQPPVIENYANRLKNILLSIDKKIVDDRFAMAEFLLNEEEKKNLLEIVESSKTNGSDTQNLEKSEVIKKIKHVINDGKNKENQNSFATIVTHAIIDRKENDLERRIAFVCEELKNLGQMKEQIPLADLNKLSESFKIMFS</sequence>
<gene>
    <name evidence="4" type="primary">cGLR</name>
</gene>
<reference key="1">
    <citation type="submission" date="2014-01" db="EMBL/GenBank/DDBJ databases">
        <authorList>
            <person name="Murali S."/>
            <person name="Richards S."/>
            <person name="Bandaranaike D."/>
            <person name="Bellair M."/>
            <person name="Blankenburg K."/>
            <person name="Chao H."/>
            <person name="Dinh H."/>
            <person name="Doddapaneni H."/>
            <person name="Dugan-Rocha S."/>
            <person name="Elkadiri S."/>
            <person name="Gnanaolivu R."/>
            <person name="Hernandez B."/>
            <person name="Skinner E."/>
            <person name="Javaid M."/>
            <person name="Lee S."/>
            <person name="Li M."/>
            <person name="Ming W."/>
            <person name="Munidasa M."/>
            <person name="Muniz J."/>
            <person name="Nguyen L."/>
            <person name="Hughes D."/>
            <person name="Osuji N."/>
            <person name="Pu L.-L."/>
            <person name="Puazo M."/>
            <person name="Qu C."/>
            <person name="Quiroz J."/>
            <person name="Raj R."/>
            <person name="Weissenberger G."/>
            <person name="Xin Y."/>
            <person name="Zou X."/>
            <person name="Han Y."/>
            <person name="Worley K."/>
            <person name="Muzny D."/>
            <person name="Gibbs R."/>
        </authorList>
    </citation>
    <scope>NUCLEOTIDE SEQUENCE [LARGE SCALE GENOMIC DNA]</scope>
</reference>
<reference key="2">
    <citation type="journal article" date="2023" name="Cell">
        <title>cGLRs are a diverse family of pattern recognition receptors in innate immunity.</title>
        <authorList>
            <person name="Li Y."/>
            <person name="Slavik K.M."/>
            <person name="Toyoda H.C."/>
            <person name="Morehouse B.R."/>
            <person name="de Oliveira Mann C.C."/>
            <person name="Elek A."/>
            <person name="Levy S."/>
            <person name="Wang Z."/>
            <person name="Mears K.S."/>
            <person name="Liu J."/>
            <person name="Kashin D."/>
            <person name="Guo X."/>
            <person name="Mass T."/>
            <person name="Sebe-Pedros A."/>
            <person name="Schwede F."/>
            <person name="Kranzusch P.J."/>
        </authorList>
    </citation>
    <scope>FUNCTION</scope>
    <scope>CATALYTIC ACTIVITY</scope>
</reference>
<accession>P0DXB4</accession>
<keyword id="KW-0067">ATP-binding</keyword>
<keyword id="KW-0342">GTP-binding</keyword>
<keyword id="KW-0391">Immunity</keyword>
<keyword id="KW-0399">Innate immunity</keyword>
<keyword id="KW-0460">Magnesium</keyword>
<keyword id="KW-0464">Manganese</keyword>
<keyword id="KW-0479">Metal-binding</keyword>
<keyword id="KW-0547">Nucleotide-binding</keyword>
<keyword id="KW-0548">Nucleotidyltransferase</keyword>
<keyword id="KW-0808">Transferase</keyword>
<dbReference type="EC" id="2.7.7.86" evidence="3"/>
<dbReference type="EMBL" id="JARR02001022">
    <property type="status" value="NOT_ANNOTATED_CDS"/>
    <property type="molecule type" value="Genomic_DNA"/>
</dbReference>
<dbReference type="SMR" id="P0DXB4"/>
<dbReference type="KEGG" id="tpre:106649006"/>
<dbReference type="OMA" id="ANLKSYH"/>
<dbReference type="GO" id="GO:0061501">
    <property type="term" value="F:2',3'-cyclic GMP-AMP synthase activity"/>
    <property type="evidence" value="ECO:0000314"/>
    <property type="project" value="UniProtKB"/>
</dbReference>
<dbReference type="GO" id="GO:0005524">
    <property type="term" value="F:ATP binding"/>
    <property type="evidence" value="ECO:0007669"/>
    <property type="project" value="UniProtKB-KW"/>
</dbReference>
<dbReference type="GO" id="GO:0005525">
    <property type="term" value="F:GTP binding"/>
    <property type="evidence" value="ECO:0007669"/>
    <property type="project" value="UniProtKB-KW"/>
</dbReference>
<dbReference type="GO" id="GO:0046872">
    <property type="term" value="F:metal ion binding"/>
    <property type="evidence" value="ECO:0007669"/>
    <property type="project" value="UniProtKB-KW"/>
</dbReference>
<dbReference type="GO" id="GO:0045087">
    <property type="term" value="P:innate immune response"/>
    <property type="evidence" value="ECO:0007669"/>
    <property type="project" value="UniProtKB-KW"/>
</dbReference>
<dbReference type="Gene3D" id="1.10.1410.40">
    <property type="match status" value="1"/>
</dbReference>
<dbReference type="Gene3D" id="3.30.460.90">
    <property type="match status" value="1"/>
</dbReference>
<dbReference type="InterPro" id="IPR046903">
    <property type="entry name" value="Mab-21-like_nuc_Trfase"/>
</dbReference>
<dbReference type="InterPro" id="IPR046906">
    <property type="entry name" value="Mab-21_HhH/H2TH-like"/>
</dbReference>
<dbReference type="InterPro" id="IPR024810">
    <property type="entry name" value="MAB21L/cGLR"/>
</dbReference>
<dbReference type="PANTHER" id="PTHR10656">
    <property type="entry name" value="CELL FATE DETERMINING PROTEIN MAB21-RELATED"/>
    <property type="match status" value="1"/>
</dbReference>
<dbReference type="PANTHER" id="PTHR10656:SF42">
    <property type="entry name" value="CYCLIC GMP-AMP SYNTHASE-LIKE PROTEIN-RELATED"/>
    <property type="match status" value="1"/>
</dbReference>
<dbReference type="Pfam" id="PF03281">
    <property type="entry name" value="Mab-21"/>
    <property type="match status" value="1"/>
</dbReference>
<dbReference type="Pfam" id="PF20266">
    <property type="entry name" value="Mab-21_C"/>
    <property type="match status" value="1"/>
</dbReference>
<dbReference type="SMART" id="SM01265">
    <property type="entry name" value="Mab-21"/>
    <property type="match status" value="1"/>
</dbReference>
<protein>
    <recommendedName>
        <fullName evidence="5">Cyclic GMP-AMP synthase-like receptor</fullName>
        <shortName evidence="4">Tp-cGLR</shortName>
        <ecNumber evidence="3">2.7.7.86</ecNumber>
    </recommendedName>
</protein>
<proteinExistence type="evidence at protein level"/>
<organism>
    <name type="scientific">Trichogramma pretiosum</name>
    <name type="common">Parasitoid wasp</name>
    <dbReference type="NCBI Taxonomy" id="7493"/>
    <lineage>
        <taxon>Eukaryota</taxon>
        <taxon>Metazoa</taxon>
        <taxon>Ecdysozoa</taxon>
        <taxon>Arthropoda</taxon>
        <taxon>Hexapoda</taxon>
        <taxon>Insecta</taxon>
        <taxon>Pterygota</taxon>
        <taxon>Neoptera</taxon>
        <taxon>Endopterygota</taxon>
        <taxon>Hymenoptera</taxon>
        <taxon>Apocrita</taxon>
        <taxon>Proctotrupomorpha</taxon>
        <taxon>Chalcidoidea</taxon>
        <taxon>Trichogrammatidae</taxon>
        <taxon>Trichogramma</taxon>
    </lineage>
</organism>
<name>CGLR_TRIPJ</name>
<evidence type="ECO:0000250" key="1">
    <source>
        <dbReference type="UniProtKB" id="D6WI29"/>
    </source>
</evidence>
<evidence type="ECO:0000250" key="2">
    <source>
        <dbReference type="UniProtKB" id="Q8N884"/>
    </source>
</evidence>
<evidence type="ECO:0000269" key="3">
    <source>
    </source>
</evidence>
<evidence type="ECO:0000303" key="4">
    <source>
    </source>
</evidence>
<evidence type="ECO:0000305" key="5"/>